<sequence length="78" mass="8693">MRDRILAAVCDVLYIDEADLIDGDETDLRDLGLDSVRFVLLMKQLGVNRQSELPSRLAANPSIAGWLRELEAVCTEFG</sequence>
<keyword id="KW-0276">Fatty acid metabolism</keyword>
<keyword id="KW-0443">Lipid metabolism</keyword>
<keyword id="KW-0596">Phosphopantetheine</keyword>
<keyword id="KW-0597">Phosphoprotein</keyword>
<keyword id="KW-1185">Reference proteome</keyword>
<evidence type="ECO:0000250" key="1">
    <source>
        <dbReference type="UniProtKB" id="P9WM65"/>
    </source>
</evidence>
<evidence type="ECO:0000255" key="2">
    <source>
        <dbReference type="PROSITE-ProRule" id="PRU00258"/>
    </source>
</evidence>
<evidence type="ECO:0000305" key="3"/>
<protein>
    <recommendedName>
        <fullName evidence="1">Acyl carrier protein MT0109</fullName>
    </recommendedName>
</protein>
<comment type="function">
    <text evidence="1">Acyl-carrier protein (ACP) involved in the biosynthesis of a unique class of isonitrile lipopeptides (INLPs) that seem to function as virulence factors in M.tuberculosis and to play a role in metal acquisition. Is the dedicated ACP for the loading of activated acyl groups catalyzed by FadD10.</text>
</comment>
<comment type="cofactor">
    <cofactor evidence="2">
        <name>pantetheine 4'-phosphate</name>
        <dbReference type="ChEBI" id="CHEBI:47942"/>
    </cofactor>
</comment>
<comment type="pathway">
    <text evidence="1">Lipid metabolism; fatty acid metabolism.</text>
</comment>
<comment type="similarity">
    <text evidence="3">Belongs to the acyl carrier protein (ACP) family.</text>
</comment>
<proteinExistence type="inferred from homology"/>
<reference key="1">
    <citation type="journal article" date="2002" name="J. Bacteriol.">
        <title>Whole-genome comparison of Mycobacterium tuberculosis clinical and laboratory strains.</title>
        <authorList>
            <person name="Fleischmann R.D."/>
            <person name="Alland D."/>
            <person name="Eisen J.A."/>
            <person name="Carpenter L."/>
            <person name="White O."/>
            <person name="Peterson J.D."/>
            <person name="DeBoy R.T."/>
            <person name="Dodson R.J."/>
            <person name="Gwinn M.L."/>
            <person name="Haft D.H."/>
            <person name="Hickey E.K."/>
            <person name="Kolonay J.F."/>
            <person name="Nelson W.C."/>
            <person name="Umayam L.A."/>
            <person name="Ermolaeva M.D."/>
            <person name="Salzberg S.L."/>
            <person name="Delcher A."/>
            <person name="Utterback T.R."/>
            <person name="Weidman J.F."/>
            <person name="Khouri H.M."/>
            <person name="Gill J."/>
            <person name="Mikula A."/>
            <person name="Bishai W."/>
            <person name="Jacobs W.R. Jr."/>
            <person name="Venter J.C."/>
            <person name="Fraser C.M."/>
        </authorList>
    </citation>
    <scope>NUCLEOTIDE SEQUENCE [LARGE SCALE GENOMIC DNA]</scope>
    <source>
        <strain>CDC 1551 / Oshkosh</strain>
    </source>
</reference>
<accession>P9WM64</accession>
<accession>L0T2L2</accession>
<accession>P64687</accession>
<accession>Q10895</accession>
<name>INLPB_MYCTO</name>
<feature type="chain" id="PRO_0000427358" description="Acyl carrier protein MT0109">
    <location>
        <begin position="1"/>
        <end position="78"/>
    </location>
</feature>
<feature type="domain" description="Carrier" evidence="2">
    <location>
        <begin position="1"/>
        <end position="78"/>
    </location>
</feature>
<feature type="modified residue" description="O-(pantetheine 4'-phosphoryl)serine" evidence="2">
    <location>
        <position position="35"/>
    </location>
</feature>
<organism>
    <name type="scientific">Mycobacterium tuberculosis (strain CDC 1551 / Oshkosh)</name>
    <dbReference type="NCBI Taxonomy" id="83331"/>
    <lineage>
        <taxon>Bacteria</taxon>
        <taxon>Bacillati</taxon>
        <taxon>Actinomycetota</taxon>
        <taxon>Actinomycetes</taxon>
        <taxon>Mycobacteriales</taxon>
        <taxon>Mycobacteriaceae</taxon>
        <taxon>Mycobacterium</taxon>
        <taxon>Mycobacterium tuberculosis complex</taxon>
    </lineage>
</organism>
<dbReference type="EMBL" id="AE000516">
    <property type="protein sequence ID" value="AAK44331.1"/>
    <property type="molecule type" value="Genomic_DNA"/>
</dbReference>
<dbReference type="PIR" id="D70751">
    <property type="entry name" value="D70751"/>
</dbReference>
<dbReference type="RefSeq" id="WP_003400793.1">
    <property type="nucleotide sequence ID" value="NZ_KK341227.1"/>
</dbReference>
<dbReference type="SMR" id="P9WM64"/>
<dbReference type="KEGG" id="mtc:MT0109"/>
<dbReference type="PATRIC" id="fig|83331.31.peg.114"/>
<dbReference type="HOGENOM" id="CLU_2602322_0_0_11"/>
<dbReference type="UniPathway" id="UPA00199"/>
<dbReference type="Proteomes" id="UP000001020">
    <property type="component" value="Chromosome"/>
</dbReference>
<dbReference type="GO" id="GO:0006631">
    <property type="term" value="P:fatty acid metabolic process"/>
    <property type="evidence" value="ECO:0007669"/>
    <property type="project" value="UniProtKB-UniPathway"/>
</dbReference>
<dbReference type="Gene3D" id="1.10.1200.10">
    <property type="entry name" value="ACP-like"/>
    <property type="match status" value="1"/>
</dbReference>
<dbReference type="InterPro" id="IPR036736">
    <property type="entry name" value="ACP-like_sf"/>
</dbReference>
<dbReference type="InterPro" id="IPR009081">
    <property type="entry name" value="PP-bd_ACP"/>
</dbReference>
<dbReference type="Pfam" id="PF00550">
    <property type="entry name" value="PP-binding"/>
    <property type="match status" value="1"/>
</dbReference>
<dbReference type="SUPFAM" id="SSF47336">
    <property type="entry name" value="ACP-like"/>
    <property type="match status" value="1"/>
</dbReference>
<dbReference type="PROSITE" id="PS50075">
    <property type="entry name" value="CARRIER"/>
    <property type="match status" value="1"/>
</dbReference>
<gene>
    <name type="ordered locus">MT0109</name>
</gene>